<comment type="function">
    <text evidence="1">Part of a complex that catalyzes the formation of methyl-coenzyme M and tetrahydromethanopterin from coenzyme M and methyl-tetrahydromethanopterin. This is an energy-conserving, sodium-ion translocating step. MtrH catalyzes the transfer of the methyl group from methyl-tetrahydromethanopterin to the corrinoid prosthetic group of MtrA.</text>
</comment>
<comment type="catalytic activity">
    <reaction evidence="1">
        <text>5-methyl-5,6,7,8-tetrahydromethanopterin + coenzyme M + 2 Na(+)(in) = 5,6,7,8-tetrahydromethanopterin + methyl-coenzyme M + 2 Na(+)(out)</text>
        <dbReference type="Rhea" id="RHEA:53492"/>
        <dbReference type="ChEBI" id="CHEBI:29101"/>
        <dbReference type="ChEBI" id="CHEBI:58103"/>
        <dbReference type="ChEBI" id="CHEBI:58116"/>
        <dbReference type="ChEBI" id="CHEBI:58286"/>
        <dbReference type="ChEBI" id="CHEBI:58319"/>
        <dbReference type="EC" id="7.2.1.4"/>
    </reaction>
</comment>
<comment type="pathway">
    <text evidence="1">One-carbon metabolism; methanogenesis from CO(2); methyl-coenzyme M from 5,10-methylene-5,6,7,8-tetrahydromethanopterin: step 2/2.</text>
</comment>
<comment type="subunit">
    <text evidence="1">The complex is composed of 8 subunits; MtrA, MtrB, MtrC, MtrD, MtrE, MtrF, MtrG and MtrH.</text>
</comment>
<comment type="similarity">
    <text evidence="1">Belongs to the MtrH family.</text>
</comment>
<comment type="sequence caution" evidence="2">
    <conflict type="erroneous initiation">
        <sequence resource="EMBL-CDS" id="AAB98859"/>
    </conflict>
</comment>
<gene>
    <name evidence="1" type="primary">mtrH</name>
    <name type="ordered locus">MJ0854</name>
</gene>
<proteinExistence type="inferred from homology"/>
<reference key="1">
    <citation type="journal article" date="1996" name="Science">
        <title>Complete genome sequence of the methanogenic archaeon, Methanococcus jannaschii.</title>
        <authorList>
            <person name="Bult C.J."/>
            <person name="White O."/>
            <person name="Olsen G.J."/>
            <person name="Zhou L."/>
            <person name="Fleischmann R.D."/>
            <person name="Sutton G.G."/>
            <person name="Blake J.A."/>
            <person name="FitzGerald L.M."/>
            <person name="Clayton R.A."/>
            <person name="Gocayne J.D."/>
            <person name="Kerlavage A.R."/>
            <person name="Dougherty B.A."/>
            <person name="Tomb J.-F."/>
            <person name="Adams M.D."/>
            <person name="Reich C.I."/>
            <person name="Overbeek R."/>
            <person name="Kirkness E.F."/>
            <person name="Weinstock K.G."/>
            <person name="Merrick J.M."/>
            <person name="Glodek A."/>
            <person name="Scott J.L."/>
            <person name="Geoghagen N.S.M."/>
            <person name="Weidman J.F."/>
            <person name="Fuhrmann J.L."/>
            <person name="Nguyen D."/>
            <person name="Utterback T.R."/>
            <person name="Kelley J.M."/>
            <person name="Peterson J.D."/>
            <person name="Sadow P.W."/>
            <person name="Hanna M.C."/>
            <person name="Cotton M.D."/>
            <person name="Roberts K.M."/>
            <person name="Hurst M.A."/>
            <person name="Kaine B.P."/>
            <person name="Borodovsky M."/>
            <person name="Klenk H.-P."/>
            <person name="Fraser C.M."/>
            <person name="Smith H.O."/>
            <person name="Woese C.R."/>
            <person name="Venter J.C."/>
        </authorList>
    </citation>
    <scope>NUCLEOTIDE SEQUENCE [LARGE SCALE GENOMIC DNA]</scope>
    <source>
        <strain>ATCC 43067 / DSM 2661 / JAL-1 / JCM 10045 / NBRC 100440</strain>
    </source>
</reference>
<evidence type="ECO:0000255" key="1">
    <source>
        <dbReference type="HAMAP-Rule" id="MF_01501"/>
    </source>
</evidence>
<evidence type="ECO:0000305" key="2"/>
<protein>
    <recommendedName>
        <fullName evidence="1">Tetrahydromethanopterin S-methyltransferase subunit H</fullName>
        <ecNumber evidence="1">7.2.1.4</ecNumber>
    </recommendedName>
    <alternativeName>
        <fullName evidence="1">N5-methyltetrahydromethanopterin--coenzyme M methyltransferase subunit H</fullName>
    </alternativeName>
</protein>
<organism>
    <name type="scientific">Methanocaldococcus jannaschii (strain ATCC 43067 / DSM 2661 / JAL-1 / JCM 10045 / NBRC 100440)</name>
    <name type="common">Methanococcus jannaschii</name>
    <dbReference type="NCBI Taxonomy" id="243232"/>
    <lineage>
        <taxon>Archaea</taxon>
        <taxon>Methanobacteriati</taxon>
        <taxon>Methanobacteriota</taxon>
        <taxon>Methanomada group</taxon>
        <taxon>Methanococci</taxon>
        <taxon>Methanococcales</taxon>
        <taxon>Methanocaldococcaceae</taxon>
        <taxon>Methanocaldococcus</taxon>
    </lineage>
</organism>
<feature type="chain" id="PRO_0000147563" description="Tetrahydromethanopterin S-methyltransferase subunit H">
    <location>
        <begin position="1"/>
        <end position="319"/>
    </location>
</feature>
<accession>Q58264</accession>
<sequence>MFKFDREQMVVEIAGRKIGGQPGEYPTALAGTIFYARHKIVEDERKGIFDKAAAEDLINKQAEMEDITGNPALVQVFGGTPEALVNYIDFVAEVWDGPMLLDSTSGEARMAAAKRATEAGYAKQCIYNSINVSIDEQEYQVLVESDLEASIVLCFDPMDPTVEGKINVLTNGGKTADKGMLELAEKAGIKYPLIDTAVTPLGNGAGAAVRASFAVKALFGYPVGSGIHNIPSAWDWLREFRKQLREAGEREKAKDIHHVCDVGANLVQVMASGDFVLYGPIDNAYMTFPAVAMVDAIIAEAAKELGIEPIDTHPFKKLV</sequence>
<name>MTRH_METJA</name>
<keyword id="KW-0484">Methanogenesis</keyword>
<keyword id="KW-0489">Methyltransferase</keyword>
<keyword id="KW-0554">One-carbon metabolism</keyword>
<keyword id="KW-1185">Reference proteome</keyword>
<keyword id="KW-0808">Transferase</keyword>
<keyword id="KW-1278">Translocase</keyword>
<dbReference type="EC" id="7.2.1.4" evidence="1"/>
<dbReference type="EMBL" id="L77117">
    <property type="protein sequence ID" value="AAB98859.1"/>
    <property type="status" value="ALT_INIT"/>
    <property type="molecule type" value="Genomic_DNA"/>
</dbReference>
<dbReference type="PIR" id="F64406">
    <property type="entry name" value="F64406"/>
</dbReference>
<dbReference type="RefSeq" id="WP_010870368.1">
    <property type="nucleotide sequence ID" value="NC_000909.1"/>
</dbReference>
<dbReference type="SMR" id="Q58264"/>
<dbReference type="FunCoup" id="Q58264">
    <property type="interactions" value="91"/>
</dbReference>
<dbReference type="STRING" id="243232.MJ_0854"/>
<dbReference type="PaxDb" id="243232-MJ_0854"/>
<dbReference type="DNASU" id="1451742"/>
<dbReference type="EnsemblBacteria" id="AAB98859">
    <property type="protein sequence ID" value="AAB98859"/>
    <property type="gene ID" value="MJ_0854"/>
</dbReference>
<dbReference type="GeneID" id="1451742"/>
<dbReference type="KEGG" id="mja:MJ_0854"/>
<dbReference type="eggNOG" id="arCOG04336">
    <property type="taxonomic scope" value="Archaea"/>
</dbReference>
<dbReference type="HOGENOM" id="CLU_048697_0_0_2"/>
<dbReference type="InParanoid" id="Q58264"/>
<dbReference type="OrthoDB" id="18811at2157"/>
<dbReference type="PhylomeDB" id="Q58264"/>
<dbReference type="UniPathway" id="UPA00640">
    <property type="reaction ID" value="UER00698"/>
</dbReference>
<dbReference type="Proteomes" id="UP000000805">
    <property type="component" value="Chromosome"/>
</dbReference>
<dbReference type="GO" id="GO:0030269">
    <property type="term" value="F:tetrahydromethanopterin S-methyltransferase activity"/>
    <property type="evidence" value="ECO:0007669"/>
    <property type="project" value="UniProtKB-UniRule"/>
</dbReference>
<dbReference type="GO" id="GO:0019386">
    <property type="term" value="P:methanogenesis, from carbon dioxide"/>
    <property type="evidence" value="ECO:0007669"/>
    <property type="project" value="UniProtKB-UniRule"/>
</dbReference>
<dbReference type="GO" id="GO:0032259">
    <property type="term" value="P:methylation"/>
    <property type="evidence" value="ECO:0007669"/>
    <property type="project" value="UniProtKB-KW"/>
</dbReference>
<dbReference type="GO" id="GO:0006730">
    <property type="term" value="P:one-carbon metabolic process"/>
    <property type="evidence" value="ECO:0007669"/>
    <property type="project" value="UniProtKB-UniRule"/>
</dbReference>
<dbReference type="Gene3D" id="3.20.20.20">
    <property type="entry name" value="Dihydropteroate synthase-like"/>
    <property type="match status" value="1"/>
</dbReference>
<dbReference type="HAMAP" id="MF_01501">
    <property type="entry name" value="MtrH"/>
    <property type="match status" value="1"/>
</dbReference>
<dbReference type="InterPro" id="IPR011005">
    <property type="entry name" value="Dihydropteroate_synth-like_sf"/>
</dbReference>
<dbReference type="InterPro" id="IPR023467">
    <property type="entry name" value="MeTrfase_MtrH/MtxH"/>
</dbReference>
<dbReference type="InterPro" id="IPR028342">
    <property type="entry name" value="MtrH"/>
</dbReference>
<dbReference type="NCBIfam" id="TIGR01114">
    <property type="entry name" value="mtrH"/>
    <property type="match status" value="1"/>
</dbReference>
<dbReference type="Pfam" id="PF02007">
    <property type="entry name" value="MtrH"/>
    <property type="match status" value="1"/>
</dbReference>
<dbReference type="PIRSF" id="PIRSF500206">
    <property type="entry name" value="MtrH"/>
    <property type="match status" value="1"/>
</dbReference>
<dbReference type="PIRSF" id="PIRSF004960">
    <property type="entry name" value="MtrH_MtxH"/>
    <property type="match status" value="1"/>
</dbReference>
<dbReference type="SUPFAM" id="SSF51717">
    <property type="entry name" value="Dihydropteroate synthetase-like"/>
    <property type="match status" value="1"/>
</dbReference>